<accession>A0KB90</accession>
<organism>
    <name type="scientific">Burkholderia cenocepacia (strain HI2424)</name>
    <dbReference type="NCBI Taxonomy" id="331272"/>
    <lineage>
        <taxon>Bacteria</taxon>
        <taxon>Pseudomonadati</taxon>
        <taxon>Pseudomonadota</taxon>
        <taxon>Betaproteobacteria</taxon>
        <taxon>Burkholderiales</taxon>
        <taxon>Burkholderiaceae</taxon>
        <taxon>Burkholderia</taxon>
        <taxon>Burkholderia cepacia complex</taxon>
    </lineage>
</organism>
<keyword id="KW-0975">Bacterial flagellum</keyword>
<keyword id="KW-0998">Cell outer membrane</keyword>
<keyword id="KW-0449">Lipoprotein</keyword>
<keyword id="KW-0472">Membrane</keyword>
<keyword id="KW-0564">Palmitate</keyword>
<keyword id="KW-0732">Signal</keyword>
<sequence>MKQVRLPSSATVRAACAVAVAALAGCAQIPRDPIIQQPMTAQPPMPMSMQAPGSIYNPGYAGRPLFEDQRPRNIGDILTIMIAENINATKSSGANTNRQGNTDFNVPTAGFLGGLFAKANLSATGANKFAATGGASAANTFNGTITVTVTNVLPNGNLVVSGEKQMLINQGNEFVRFSGVVNPNTISGANSVYSTQVADAKIEYSSKGYINEAETMGWLQRFFLNIAPW</sequence>
<evidence type="ECO:0000255" key="1">
    <source>
        <dbReference type="HAMAP-Rule" id="MF_00415"/>
    </source>
</evidence>
<proteinExistence type="inferred from homology"/>
<name>FLGH_BURCH</name>
<comment type="function">
    <text evidence="1">Assembles around the rod to form the L-ring and probably protects the motor/basal body from shearing forces during rotation.</text>
</comment>
<comment type="subunit">
    <text evidence="1">The basal body constitutes a major portion of the flagellar organelle and consists of four rings (L,P,S, and M) mounted on a central rod.</text>
</comment>
<comment type="subcellular location">
    <subcellularLocation>
        <location evidence="1">Cell outer membrane</location>
        <topology evidence="1">Lipid-anchor</topology>
    </subcellularLocation>
    <subcellularLocation>
        <location evidence="1">Bacterial flagellum basal body</location>
    </subcellularLocation>
</comment>
<comment type="similarity">
    <text evidence="1">Belongs to the FlgH family.</text>
</comment>
<protein>
    <recommendedName>
        <fullName evidence="1">Flagellar L-ring protein</fullName>
    </recommendedName>
    <alternativeName>
        <fullName evidence="1">Basal body L-ring protein</fullName>
    </alternativeName>
</protein>
<reference key="1">
    <citation type="submission" date="2006-08" db="EMBL/GenBank/DDBJ databases">
        <title>Complete sequence of chromosome 1 of Burkholderia cenocepacia HI2424.</title>
        <authorList>
            <person name="Copeland A."/>
            <person name="Lucas S."/>
            <person name="Lapidus A."/>
            <person name="Barry K."/>
            <person name="Detter J.C."/>
            <person name="Glavina del Rio T."/>
            <person name="Hammon N."/>
            <person name="Israni S."/>
            <person name="Pitluck S."/>
            <person name="Chain P."/>
            <person name="Malfatti S."/>
            <person name="Shin M."/>
            <person name="Vergez L."/>
            <person name="Schmutz J."/>
            <person name="Larimer F."/>
            <person name="Land M."/>
            <person name="Hauser L."/>
            <person name="Kyrpides N."/>
            <person name="Kim E."/>
            <person name="LiPuma J.J."/>
            <person name="Gonzalez C.F."/>
            <person name="Konstantinidis K."/>
            <person name="Tiedje J.M."/>
            <person name="Richardson P."/>
        </authorList>
    </citation>
    <scope>NUCLEOTIDE SEQUENCE [LARGE SCALE GENOMIC DNA]</scope>
    <source>
        <strain>HI2424</strain>
    </source>
</reference>
<dbReference type="EMBL" id="CP000458">
    <property type="protein sequence ID" value="ABK09767.1"/>
    <property type="molecule type" value="Genomic_DNA"/>
</dbReference>
<dbReference type="RefSeq" id="WP_011546413.1">
    <property type="nucleotide sequence ID" value="NC_008542.1"/>
</dbReference>
<dbReference type="SMR" id="A0KB90"/>
<dbReference type="GeneID" id="83049818"/>
<dbReference type="KEGG" id="bch:Bcen2424_3019"/>
<dbReference type="HOGENOM" id="CLU_069313_0_0_4"/>
<dbReference type="GO" id="GO:0009427">
    <property type="term" value="C:bacterial-type flagellum basal body, distal rod, L ring"/>
    <property type="evidence" value="ECO:0007669"/>
    <property type="project" value="InterPro"/>
</dbReference>
<dbReference type="GO" id="GO:0009279">
    <property type="term" value="C:cell outer membrane"/>
    <property type="evidence" value="ECO:0007669"/>
    <property type="project" value="UniProtKB-SubCell"/>
</dbReference>
<dbReference type="GO" id="GO:0003774">
    <property type="term" value="F:cytoskeletal motor activity"/>
    <property type="evidence" value="ECO:0007669"/>
    <property type="project" value="InterPro"/>
</dbReference>
<dbReference type="GO" id="GO:0071973">
    <property type="term" value="P:bacterial-type flagellum-dependent cell motility"/>
    <property type="evidence" value="ECO:0007669"/>
    <property type="project" value="InterPro"/>
</dbReference>
<dbReference type="HAMAP" id="MF_00415">
    <property type="entry name" value="FlgH"/>
    <property type="match status" value="1"/>
</dbReference>
<dbReference type="InterPro" id="IPR000527">
    <property type="entry name" value="Flag_Lring"/>
</dbReference>
<dbReference type="NCBIfam" id="NF009337">
    <property type="entry name" value="PRK12697.1"/>
    <property type="match status" value="1"/>
</dbReference>
<dbReference type="PANTHER" id="PTHR34933">
    <property type="entry name" value="FLAGELLAR L-RING PROTEIN"/>
    <property type="match status" value="1"/>
</dbReference>
<dbReference type="PANTHER" id="PTHR34933:SF3">
    <property type="entry name" value="FLAGELLAR L-RING PROTEIN"/>
    <property type="match status" value="1"/>
</dbReference>
<dbReference type="Pfam" id="PF02107">
    <property type="entry name" value="FlgH"/>
    <property type="match status" value="1"/>
</dbReference>
<dbReference type="PRINTS" id="PR01008">
    <property type="entry name" value="FLGLRINGFLGH"/>
</dbReference>
<dbReference type="PROSITE" id="PS51257">
    <property type="entry name" value="PROKAR_LIPOPROTEIN"/>
    <property type="match status" value="1"/>
</dbReference>
<feature type="signal peptide" evidence="1">
    <location>
        <begin position="1"/>
        <end position="25"/>
    </location>
</feature>
<feature type="chain" id="PRO_1000050082" description="Flagellar L-ring protein">
    <location>
        <begin position="26"/>
        <end position="229"/>
    </location>
</feature>
<feature type="lipid moiety-binding region" description="N-palmitoyl cysteine" evidence="1">
    <location>
        <position position="26"/>
    </location>
</feature>
<feature type="lipid moiety-binding region" description="S-diacylglycerol cysteine" evidence="1">
    <location>
        <position position="26"/>
    </location>
</feature>
<gene>
    <name evidence="1" type="primary">flgH</name>
    <name type="ordered locus">Bcen2424_3019</name>
</gene>